<comment type="function">
    <text evidence="1">Catalyzes the attachment of isoleucine to tRNA(Ile). As IleRS can inadvertently accommodate and process structurally similar amino acids such as valine, to avoid such errors it has two additional distinct tRNA(Ile)-dependent editing activities. One activity is designated as 'pretransfer' editing and involves the hydrolysis of activated Val-AMP. The other activity is designated 'posttransfer' editing and involves deacylation of mischarged Val-tRNA(Ile).</text>
</comment>
<comment type="catalytic activity">
    <reaction evidence="1">
        <text>tRNA(Ile) + L-isoleucine + ATP = L-isoleucyl-tRNA(Ile) + AMP + diphosphate</text>
        <dbReference type="Rhea" id="RHEA:11060"/>
        <dbReference type="Rhea" id="RHEA-COMP:9666"/>
        <dbReference type="Rhea" id="RHEA-COMP:9695"/>
        <dbReference type="ChEBI" id="CHEBI:30616"/>
        <dbReference type="ChEBI" id="CHEBI:33019"/>
        <dbReference type="ChEBI" id="CHEBI:58045"/>
        <dbReference type="ChEBI" id="CHEBI:78442"/>
        <dbReference type="ChEBI" id="CHEBI:78528"/>
        <dbReference type="ChEBI" id="CHEBI:456215"/>
        <dbReference type="EC" id="6.1.1.5"/>
    </reaction>
</comment>
<comment type="cofactor">
    <cofactor evidence="1">
        <name>Zn(2+)</name>
        <dbReference type="ChEBI" id="CHEBI:29105"/>
    </cofactor>
    <text evidence="1">Binds 1 zinc ion per subunit.</text>
</comment>
<comment type="subunit">
    <text evidence="1">Monomer.</text>
</comment>
<comment type="subcellular location">
    <subcellularLocation>
        <location evidence="1">Cytoplasm</location>
    </subcellularLocation>
</comment>
<comment type="domain">
    <text evidence="1">IleRS has two distinct active sites: one for aminoacylation and one for editing. The misactivated valine is translocated from the active site to the editing site, which sterically excludes the correctly activated isoleucine. The single editing site contains two valyl binding pockets, one specific for each substrate (Val-AMP or Val-tRNA(Ile)).</text>
</comment>
<comment type="similarity">
    <text evidence="1">Belongs to the class-I aminoacyl-tRNA synthetase family. IleS type 1 subfamily.</text>
</comment>
<evidence type="ECO:0000255" key="1">
    <source>
        <dbReference type="HAMAP-Rule" id="MF_02002"/>
    </source>
</evidence>
<sequence>MSDYKSTLNLPETGFPMRGDLAKREPGMLARWTDDDLYGIIRAAKKGKKTFILHDGPPYANGSIHIGHSVNKILKDIIIKSKGLSGYDSPYVPGWDCHGLPIELKVEQEYGKPGEKFTAAEFRAKCREYAATQVDGQRKDFIRLGVLGDWSHPYLTMDFKTEANIIRALGKIIGNGHLHKGAKPVHWCVDCRSALAEAEVEYYDKTSPSIDVAFQAVDQDALKTKFGVSNVNGPISLVIWTTTPWTLPANRAISIAPDFDYALVQIDGQAVILAKDLVESVMQRIGVSDYTILGTVKGAELELLRFTHPFMDFDVPAILGDHVTLDAGTGAVHTAPGHGPDDYVIGQKYGLETANPVGPDGTYLPGTYPTLDGVNVFKANDIVIALLQEKGALLHVEKMQHSYPCCWRHKTPIIFRATPQWFVSMDQKGLRAQSLKEIKGVQWIPDWGQARIESMVANRPDWCISRQRTWGVPMSLFVHKDTEELHPRTLELMEEVAKRVEVDGIQAWWDLDAKEILGDEADQYVKVPDTLDVWFDSGSTHSSVVDVRPEFAGHAADMYLEGSDQHRGWFMSSLMISTAMKGKAPYRQVLTHGFTVDGQGRKMSKSIGNTVSPQDVMNKLGADILRLWVASTDYTGEMAVSDEILKRAADSYRRIRNTARFLLANLNGFDPAKDMVKPEEMVVLDRWAVGCAKAAQEDILKAYEAYDFHEVVQRLMRFCSVEMGSFYLDIIKDRQYTAKADSVARRSCQTALYHIAEALVRWMAPILSFTADEVWGYLPGEREKYVFTGEWYEGLFGLADSEAMNDAFWDELLKVRGEVNKVIEQARADKKVGGSLEAAVTLYAEPVLAAKLTALGDELRFVLLTSGATVADYNDAPADAQQSEVLKGLKVALSKAEGEKCPRCWHYTQDVGKVAEHAEICGRCVSNVAGDGEKRKFA</sequence>
<accession>B7UI71</accession>
<keyword id="KW-0007">Acetylation</keyword>
<keyword id="KW-0030">Aminoacyl-tRNA synthetase</keyword>
<keyword id="KW-0067">ATP-binding</keyword>
<keyword id="KW-0963">Cytoplasm</keyword>
<keyword id="KW-0436">Ligase</keyword>
<keyword id="KW-0479">Metal-binding</keyword>
<keyword id="KW-0547">Nucleotide-binding</keyword>
<keyword id="KW-0648">Protein biosynthesis</keyword>
<keyword id="KW-1185">Reference proteome</keyword>
<keyword id="KW-0862">Zinc</keyword>
<name>SYI_ECO27</name>
<protein>
    <recommendedName>
        <fullName evidence="1">Isoleucine--tRNA ligase</fullName>
        <ecNumber evidence="1">6.1.1.5</ecNumber>
    </recommendedName>
    <alternativeName>
        <fullName evidence="1">Isoleucyl-tRNA synthetase</fullName>
        <shortName evidence="1">IleRS</shortName>
    </alternativeName>
</protein>
<gene>
    <name evidence="1" type="primary">ileS</name>
    <name type="ordered locus">E2348C_0026</name>
</gene>
<proteinExistence type="inferred from homology"/>
<organism>
    <name type="scientific">Escherichia coli O127:H6 (strain E2348/69 / EPEC)</name>
    <dbReference type="NCBI Taxonomy" id="574521"/>
    <lineage>
        <taxon>Bacteria</taxon>
        <taxon>Pseudomonadati</taxon>
        <taxon>Pseudomonadota</taxon>
        <taxon>Gammaproteobacteria</taxon>
        <taxon>Enterobacterales</taxon>
        <taxon>Enterobacteriaceae</taxon>
        <taxon>Escherichia</taxon>
    </lineage>
</organism>
<dbReference type="EC" id="6.1.1.5" evidence="1"/>
<dbReference type="EMBL" id="FM180568">
    <property type="protein sequence ID" value="CAS07574.1"/>
    <property type="molecule type" value="Genomic_DNA"/>
</dbReference>
<dbReference type="RefSeq" id="WP_001286824.1">
    <property type="nucleotide sequence ID" value="NC_011601.1"/>
</dbReference>
<dbReference type="SMR" id="B7UI71"/>
<dbReference type="KEGG" id="ecg:E2348C_0026"/>
<dbReference type="HOGENOM" id="CLU_001493_7_1_6"/>
<dbReference type="Proteomes" id="UP000008205">
    <property type="component" value="Chromosome"/>
</dbReference>
<dbReference type="GO" id="GO:0005829">
    <property type="term" value="C:cytosol"/>
    <property type="evidence" value="ECO:0007669"/>
    <property type="project" value="TreeGrafter"/>
</dbReference>
<dbReference type="GO" id="GO:0002161">
    <property type="term" value="F:aminoacyl-tRNA deacylase activity"/>
    <property type="evidence" value="ECO:0007669"/>
    <property type="project" value="InterPro"/>
</dbReference>
<dbReference type="GO" id="GO:0005524">
    <property type="term" value="F:ATP binding"/>
    <property type="evidence" value="ECO:0007669"/>
    <property type="project" value="UniProtKB-UniRule"/>
</dbReference>
<dbReference type="GO" id="GO:0004822">
    <property type="term" value="F:isoleucine-tRNA ligase activity"/>
    <property type="evidence" value="ECO:0007669"/>
    <property type="project" value="UniProtKB-UniRule"/>
</dbReference>
<dbReference type="GO" id="GO:0000049">
    <property type="term" value="F:tRNA binding"/>
    <property type="evidence" value="ECO:0007669"/>
    <property type="project" value="InterPro"/>
</dbReference>
<dbReference type="GO" id="GO:0008270">
    <property type="term" value="F:zinc ion binding"/>
    <property type="evidence" value="ECO:0007669"/>
    <property type="project" value="UniProtKB-UniRule"/>
</dbReference>
<dbReference type="GO" id="GO:0006428">
    <property type="term" value="P:isoleucyl-tRNA aminoacylation"/>
    <property type="evidence" value="ECO:0007669"/>
    <property type="project" value="UniProtKB-UniRule"/>
</dbReference>
<dbReference type="CDD" id="cd07960">
    <property type="entry name" value="Anticodon_Ia_Ile_BEm"/>
    <property type="match status" value="1"/>
</dbReference>
<dbReference type="CDD" id="cd00818">
    <property type="entry name" value="IleRS_core"/>
    <property type="match status" value="1"/>
</dbReference>
<dbReference type="FunFam" id="1.10.730.20:FF:000001">
    <property type="entry name" value="Isoleucine--tRNA ligase"/>
    <property type="match status" value="1"/>
</dbReference>
<dbReference type="FunFam" id="3.40.50.620:FF:000042">
    <property type="entry name" value="Isoleucine--tRNA ligase"/>
    <property type="match status" value="1"/>
</dbReference>
<dbReference type="FunFam" id="3.40.50.620:FF:000048">
    <property type="entry name" value="Isoleucine--tRNA ligase"/>
    <property type="match status" value="1"/>
</dbReference>
<dbReference type="FunFam" id="3.90.740.10:FF:000002">
    <property type="entry name" value="Isoleucine--tRNA ligase"/>
    <property type="match status" value="1"/>
</dbReference>
<dbReference type="Gene3D" id="1.10.730.20">
    <property type="match status" value="1"/>
</dbReference>
<dbReference type="Gene3D" id="3.40.50.620">
    <property type="entry name" value="HUPs"/>
    <property type="match status" value="2"/>
</dbReference>
<dbReference type="Gene3D" id="3.90.740.10">
    <property type="entry name" value="Valyl/Leucyl/Isoleucyl-tRNA synthetase, editing domain"/>
    <property type="match status" value="1"/>
</dbReference>
<dbReference type="HAMAP" id="MF_02002">
    <property type="entry name" value="Ile_tRNA_synth_type1"/>
    <property type="match status" value="1"/>
</dbReference>
<dbReference type="InterPro" id="IPR001412">
    <property type="entry name" value="aa-tRNA-synth_I_CS"/>
</dbReference>
<dbReference type="InterPro" id="IPR002300">
    <property type="entry name" value="aa-tRNA-synth_Ia"/>
</dbReference>
<dbReference type="InterPro" id="IPR033708">
    <property type="entry name" value="Anticodon_Ile_BEm"/>
</dbReference>
<dbReference type="InterPro" id="IPR002301">
    <property type="entry name" value="Ile-tRNA-ligase"/>
</dbReference>
<dbReference type="InterPro" id="IPR023585">
    <property type="entry name" value="Ile-tRNA-ligase_type1"/>
</dbReference>
<dbReference type="InterPro" id="IPR050081">
    <property type="entry name" value="Ile-tRNA_ligase"/>
</dbReference>
<dbReference type="InterPro" id="IPR013155">
    <property type="entry name" value="M/V/L/I-tRNA-synth_anticd-bd"/>
</dbReference>
<dbReference type="InterPro" id="IPR014729">
    <property type="entry name" value="Rossmann-like_a/b/a_fold"/>
</dbReference>
<dbReference type="InterPro" id="IPR009080">
    <property type="entry name" value="tRNAsynth_Ia_anticodon-bd"/>
</dbReference>
<dbReference type="InterPro" id="IPR009008">
    <property type="entry name" value="Val/Leu/Ile-tRNA-synth_edit"/>
</dbReference>
<dbReference type="InterPro" id="IPR010663">
    <property type="entry name" value="Znf_FPG/IleRS"/>
</dbReference>
<dbReference type="NCBIfam" id="TIGR00392">
    <property type="entry name" value="ileS"/>
    <property type="match status" value="1"/>
</dbReference>
<dbReference type="PANTHER" id="PTHR42765:SF1">
    <property type="entry name" value="ISOLEUCINE--TRNA LIGASE, MITOCHONDRIAL"/>
    <property type="match status" value="1"/>
</dbReference>
<dbReference type="PANTHER" id="PTHR42765">
    <property type="entry name" value="SOLEUCYL-TRNA SYNTHETASE"/>
    <property type="match status" value="1"/>
</dbReference>
<dbReference type="Pfam" id="PF08264">
    <property type="entry name" value="Anticodon_1"/>
    <property type="match status" value="1"/>
</dbReference>
<dbReference type="Pfam" id="PF00133">
    <property type="entry name" value="tRNA-synt_1"/>
    <property type="match status" value="1"/>
</dbReference>
<dbReference type="Pfam" id="PF06827">
    <property type="entry name" value="zf-FPG_IleRS"/>
    <property type="match status" value="1"/>
</dbReference>
<dbReference type="PRINTS" id="PR00984">
    <property type="entry name" value="TRNASYNTHILE"/>
</dbReference>
<dbReference type="SUPFAM" id="SSF47323">
    <property type="entry name" value="Anticodon-binding domain of a subclass of class I aminoacyl-tRNA synthetases"/>
    <property type="match status" value="1"/>
</dbReference>
<dbReference type="SUPFAM" id="SSF52374">
    <property type="entry name" value="Nucleotidylyl transferase"/>
    <property type="match status" value="1"/>
</dbReference>
<dbReference type="SUPFAM" id="SSF50677">
    <property type="entry name" value="ValRS/IleRS/LeuRS editing domain"/>
    <property type="match status" value="1"/>
</dbReference>
<dbReference type="PROSITE" id="PS00178">
    <property type="entry name" value="AA_TRNA_LIGASE_I"/>
    <property type="match status" value="1"/>
</dbReference>
<feature type="chain" id="PRO_1000189153" description="Isoleucine--tRNA ligase">
    <location>
        <begin position="1"/>
        <end position="938"/>
    </location>
</feature>
<feature type="short sequence motif" description="'HIGH' region">
    <location>
        <begin position="58"/>
        <end position="68"/>
    </location>
</feature>
<feature type="short sequence motif" description="'KMSKS' region">
    <location>
        <begin position="602"/>
        <end position="606"/>
    </location>
</feature>
<feature type="binding site" evidence="1">
    <location>
        <position position="561"/>
    </location>
    <ligand>
        <name>L-isoleucyl-5'-AMP</name>
        <dbReference type="ChEBI" id="CHEBI:178002"/>
    </ligand>
</feature>
<feature type="binding site" evidence="1">
    <location>
        <position position="605"/>
    </location>
    <ligand>
        <name>ATP</name>
        <dbReference type="ChEBI" id="CHEBI:30616"/>
    </ligand>
</feature>
<feature type="binding site" evidence="1">
    <location>
        <position position="901"/>
    </location>
    <ligand>
        <name>Zn(2+)</name>
        <dbReference type="ChEBI" id="CHEBI:29105"/>
    </ligand>
</feature>
<feature type="binding site" evidence="1">
    <location>
        <position position="904"/>
    </location>
    <ligand>
        <name>Zn(2+)</name>
        <dbReference type="ChEBI" id="CHEBI:29105"/>
    </ligand>
</feature>
<feature type="binding site" evidence="1">
    <location>
        <position position="921"/>
    </location>
    <ligand>
        <name>Zn(2+)</name>
        <dbReference type="ChEBI" id="CHEBI:29105"/>
    </ligand>
</feature>
<feature type="binding site" evidence="1">
    <location>
        <position position="924"/>
    </location>
    <ligand>
        <name>Zn(2+)</name>
        <dbReference type="ChEBI" id="CHEBI:29105"/>
    </ligand>
</feature>
<feature type="modified residue" description="N6-acetyllysine" evidence="1">
    <location>
        <position position="183"/>
    </location>
</feature>
<reference key="1">
    <citation type="journal article" date="2009" name="J. Bacteriol.">
        <title>Complete genome sequence and comparative genome analysis of enteropathogenic Escherichia coli O127:H6 strain E2348/69.</title>
        <authorList>
            <person name="Iguchi A."/>
            <person name="Thomson N.R."/>
            <person name="Ogura Y."/>
            <person name="Saunders D."/>
            <person name="Ooka T."/>
            <person name="Henderson I.R."/>
            <person name="Harris D."/>
            <person name="Asadulghani M."/>
            <person name="Kurokawa K."/>
            <person name="Dean P."/>
            <person name="Kenny B."/>
            <person name="Quail M.A."/>
            <person name="Thurston S."/>
            <person name="Dougan G."/>
            <person name="Hayashi T."/>
            <person name="Parkhill J."/>
            <person name="Frankel G."/>
        </authorList>
    </citation>
    <scope>NUCLEOTIDE SEQUENCE [LARGE SCALE GENOMIC DNA]</scope>
    <source>
        <strain>E2348/69 / EPEC</strain>
    </source>
</reference>